<keyword id="KW-0137">Centromere</keyword>
<keyword id="KW-0158">Chromosome</keyword>
<keyword id="KW-0175">Coiled coil</keyword>
<keyword id="KW-0995">Kinetochore</keyword>
<keyword id="KW-0539">Nucleus</keyword>
<keyword id="KW-1185">Reference proteome</keyword>
<comment type="function">
    <text evidence="1">Component of the CENPA-HI complex, a centromeric complex involved in assembly of kinetochore proteins, mitotic progression and chromosome segregation.</text>
</comment>
<comment type="subunit">
    <text evidence="3">Component of the CENPA-HI complex, at least composed of CENPH, CENPI, CENPK, CENPL, CENPM, CENPO and CENPP.</text>
</comment>
<comment type="subcellular location">
    <subcellularLocation>
        <location evidence="1">Nucleus</location>
    </subcellularLocation>
    <subcellularLocation>
        <location evidence="1">Chromosome</location>
        <location evidence="1">Centromere</location>
    </subcellularLocation>
    <subcellularLocation>
        <location evidence="1">Chromosome</location>
        <location evidence="1">Centromere</location>
        <location evidence="1">Kinetochore</location>
    </subcellularLocation>
    <text evidence="1">Localizes exclusively in the centromeres.</text>
</comment>
<comment type="similarity">
    <text evidence="4">Belongs to the CENP-K/MCM22 family.</text>
</comment>
<reference key="1">
    <citation type="journal article" date="2006" name="Nat. Cell Biol.">
        <title>The CENP-H-I complex is required for the efficient incorporation of newly synthesized CENP-A into centromeres.</title>
        <authorList>
            <person name="Okada M."/>
            <person name="Cheeseman I.M."/>
            <person name="Hori T."/>
            <person name="Okawa K."/>
            <person name="McLeod I.X."/>
            <person name="Yates J.R. III"/>
            <person name="Desai A."/>
            <person name="Fukagawa T."/>
        </authorList>
    </citation>
    <scope>NUCLEOTIDE SEQUENCE [MRNA]</scope>
    <scope>IDENTIFICATION BY MASS SPECTROMETRY</scope>
    <scope>IDENTIFICATION IN A COMPLEX WITH CENPH; CENPI; CENPL; CENPM; CENPO AND CENPP</scope>
</reference>
<sequence>MSDSVCPIDAKEELLRECENIWKEMEKCQSKLTLLAAEPVPESDAKVSLLLTRMQALRAEYHQWQKRNPELISTNPEVLLLLGEEELQKVKKELEMVLSAVQLKNEKLKEDLEREQQWHDEQVQILNAFKEIEEEMKKEVVTDSEKRVFQELKNQMLELKEYKKKLMNALGEFLEEHFPLPEKNGNAKKKRYSEEPPEQVITIHEILEILLNQLMSTPHEPYVTVDDSFWPPYLELLLRSGIVLRHPEDPNRIRLEAFHE</sequence>
<protein>
    <recommendedName>
        <fullName>Centromere protein K</fullName>
        <shortName>CENP-K</shortName>
    </recommendedName>
</protein>
<feature type="chain" id="PRO_0000249484" description="Centromere protein K">
    <location>
        <begin position="1"/>
        <end position="260"/>
    </location>
</feature>
<feature type="coiled-coil region" evidence="2">
    <location>
        <begin position="84"/>
        <end position="173"/>
    </location>
</feature>
<dbReference type="EMBL" id="AB231847">
    <property type="protein sequence ID" value="BAE93412.1"/>
    <property type="molecule type" value="mRNA"/>
</dbReference>
<dbReference type="RefSeq" id="NP_001038128.1">
    <property type="nucleotide sequence ID" value="NM_001044663.2"/>
</dbReference>
<dbReference type="RefSeq" id="NP_001385351.1">
    <property type="nucleotide sequence ID" value="NM_001398422.1"/>
</dbReference>
<dbReference type="RefSeq" id="NP_001385352.1">
    <property type="nucleotide sequence ID" value="NM_001398423.1"/>
</dbReference>
<dbReference type="RefSeq" id="XP_015132796.1">
    <property type="nucleotide sequence ID" value="XM_015277310.1"/>
</dbReference>
<dbReference type="SMR" id="Q1T7C1"/>
<dbReference type="BioGRID" id="686517">
    <property type="interactions" value="2"/>
</dbReference>
<dbReference type="FunCoup" id="Q1T7C1">
    <property type="interactions" value="248"/>
</dbReference>
<dbReference type="IntAct" id="Q1T7C1">
    <property type="interactions" value="1"/>
</dbReference>
<dbReference type="STRING" id="9031.ENSGALP00000023743"/>
<dbReference type="PaxDb" id="9031-ENSGALP00000023743"/>
<dbReference type="Ensembl" id="ENSGALT00010029237.1">
    <property type="protein sequence ID" value="ENSGALP00010016961.1"/>
    <property type="gene ID" value="ENSGALG00010012196.1"/>
</dbReference>
<dbReference type="GeneID" id="427162"/>
<dbReference type="KEGG" id="gga:427162"/>
<dbReference type="CTD" id="64105"/>
<dbReference type="VEuPathDB" id="HostDB:geneid_427162"/>
<dbReference type="eggNOG" id="ENOG502QVGW">
    <property type="taxonomic scope" value="Eukaryota"/>
</dbReference>
<dbReference type="GeneTree" id="ENSGT00390000006243"/>
<dbReference type="HOGENOM" id="CLU_090360_0_0_1"/>
<dbReference type="InParanoid" id="Q1T7C1"/>
<dbReference type="OMA" id="QNEIILC"/>
<dbReference type="OrthoDB" id="9445768at2759"/>
<dbReference type="PhylomeDB" id="Q1T7C1"/>
<dbReference type="PRO" id="PR:Q1T7C1"/>
<dbReference type="Proteomes" id="UP000000539">
    <property type="component" value="Chromosome Z"/>
</dbReference>
<dbReference type="GO" id="GO:0000939">
    <property type="term" value="C:inner kinetochore"/>
    <property type="evidence" value="ECO:0007669"/>
    <property type="project" value="Ensembl"/>
</dbReference>
<dbReference type="GO" id="GO:0005634">
    <property type="term" value="C:nucleus"/>
    <property type="evidence" value="ECO:0007669"/>
    <property type="project" value="UniProtKB-SubCell"/>
</dbReference>
<dbReference type="GO" id="GO:0051382">
    <property type="term" value="P:kinetochore assembly"/>
    <property type="evidence" value="ECO:0007669"/>
    <property type="project" value="InterPro"/>
</dbReference>
<dbReference type="GO" id="GO:0000070">
    <property type="term" value="P:mitotic sister chromatid segregation"/>
    <property type="evidence" value="ECO:0000318"/>
    <property type="project" value="GO_Central"/>
</dbReference>
<dbReference type="InterPro" id="IPR020993">
    <property type="entry name" value="Centromere_CenpK"/>
</dbReference>
<dbReference type="PANTHER" id="PTHR14401">
    <property type="entry name" value="CENTROMERE PROTEIN K"/>
    <property type="match status" value="1"/>
</dbReference>
<dbReference type="PANTHER" id="PTHR14401:SF6">
    <property type="entry name" value="CENTROMERE PROTEIN K"/>
    <property type="match status" value="1"/>
</dbReference>
<dbReference type="Pfam" id="PF11802">
    <property type="entry name" value="CENP-K"/>
    <property type="match status" value="1"/>
</dbReference>
<organism>
    <name type="scientific">Gallus gallus</name>
    <name type="common">Chicken</name>
    <dbReference type="NCBI Taxonomy" id="9031"/>
    <lineage>
        <taxon>Eukaryota</taxon>
        <taxon>Metazoa</taxon>
        <taxon>Chordata</taxon>
        <taxon>Craniata</taxon>
        <taxon>Vertebrata</taxon>
        <taxon>Euteleostomi</taxon>
        <taxon>Archelosauria</taxon>
        <taxon>Archosauria</taxon>
        <taxon>Dinosauria</taxon>
        <taxon>Saurischia</taxon>
        <taxon>Theropoda</taxon>
        <taxon>Coelurosauria</taxon>
        <taxon>Aves</taxon>
        <taxon>Neognathae</taxon>
        <taxon>Galloanserae</taxon>
        <taxon>Galliformes</taxon>
        <taxon>Phasianidae</taxon>
        <taxon>Phasianinae</taxon>
        <taxon>Gallus</taxon>
    </lineage>
</organism>
<proteinExistence type="evidence at protein level"/>
<evidence type="ECO:0000250" key="1"/>
<evidence type="ECO:0000255" key="2"/>
<evidence type="ECO:0000269" key="3">
    <source>
    </source>
</evidence>
<evidence type="ECO:0000305" key="4"/>
<accession>Q1T7C1</accession>
<name>CENPK_CHICK</name>
<gene>
    <name type="primary">CENPK</name>
</gene>